<gene>
    <name evidence="1" type="primary">panD</name>
    <name type="ordered locus">FTH_0675</name>
</gene>
<sequence length="111" mass="12299">MLISVLKSKISYATVTGKDLFYVGSITIDSEIMKQANIIENEKVQVVNLNNGERLETYVIKGEPNSKTIALNGPAARRCEIGDQLFIISYAQVDPTRENIKPKLVDLKTGD</sequence>
<protein>
    <recommendedName>
        <fullName evidence="1">Aspartate 1-decarboxylase</fullName>
        <ecNumber evidence="1">4.1.1.11</ecNumber>
    </recommendedName>
    <alternativeName>
        <fullName evidence="1">Aspartate alpha-decarboxylase</fullName>
    </alternativeName>
    <component>
        <recommendedName>
            <fullName evidence="1">Aspartate 1-decarboxylase beta chain</fullName>
        </recommendedName>
    </component>
    <component>
        <recommendedName>
            <fullName evidence="1">Aspartate 1-decarboxylase alpha chain</fullName>
        </recommendedName>
    </component>
</protein>
<dbReference type="EC" id="4.1.1.11" evidence="1"/>
<dbReference type="EMBL" id="CP000437">
    <property type="protein sequence ID" value="ABI82627.1"/>
    <property type="molecule type" value="Genomic_DNA"/>
</dbReference>
<dbReference type="RefSeq" id="WP_003018202.1">
    <property type="nucleotide sequence ID" value="NC_017463.1"/>
</dbReference>
<dbReference type="SMR" id="Q0BMQ7"/>
<dbReference type="GeneID" id="75264913"/>
<dbReference type="KEGG" id="fth:FTH_0675"/>
<dbReference type="UniPathway" id="UPA00028">
    <property type="reaction ID" value="UER00002"/>
</dbReference>
<dbReference type="GO" id="GO:0005829">
    <property type="term" value="C:cytosol"/>
    <property type="evidence" value="ECO:0007669"/>
    <property type="project" value="TreeGrafter"/>
</dbReference>
<dbReference type="GO" id="GO:0004068">
    <property type="term" value="F:aspartate 1-decarboxylase activity"/>
    <property type="evidence" value="ECO:0007669"/>
    <property type="project" value="UniProtKB-UniRule"/>
</dbReference>
<dbReference type="GO" id="GO:0006523">
    <property type="term" value="P:alanine biosynthetic process"/>
    <property type="evidence" value="ECO:0007669"/>
    <property type="project" value="InterPro"/>
</dbReference>
<dbReference type="GO" id="GO:0015940">
    <property type="term" value="P:pantothenate biosynthetic process"/>
    <property type="evidence" value="ECO:0007669"/>
    <property type="project" value="UniProtKB-UniRule"/>
</dbReference>
<dbReference type="CDD" id="cd06919">
    <property type="entry name" value="Asp_decarbox"/>
    <property type="match status" value="1"/>
</dbReference>
<dbReference type="Gene3D" id="2.40.40.20">
    <property type="match status" value="1"/>
</dbReference>
<dbReference type="HAMAP" id="MF_00446">
    <property type="entry name" value="PanD"/>
    <property type="match status" value="1"/>
</dbReference>
<dbReference type="InterPro" id="IPR009010">
    <property type="entry name" value="Asp_de-COase-like_dom_sf"/>
</dbReference>
<dbReference type="InterPro" id="IPR003190">
    <property type="entry name" value="Asp_decarbox"/>
</dbReference>
<dbReference type="NCBIfam" id="TIGR00223">
    <property type="entry name" value="panD"/>
    <property type="match status" value="1"/>
</dbReference>
<dbReference type="PANTHER" id="PTHR21012">
    <property type="entry name" value="ASPARTATE 1-DECARBOXYLASE"/>
    <property type="match status" value="1"/>
</dbReference>
<dbReference type="PANTHER" id="PTHR21012:SF0">
    <property type="entry name" value="ASPARTATE 1-DECARBOXYLASE"/>
    <property type="match status" value="1"/>
</dbReference>
<dbReference type="Pfam" id="PF02261">
    <property type="entry name" value="Asp_decarbox"/>
    <property type="match status" value="1"/>
</dbReference>
<dbReference type="PIRSF" id="PIRSF006246">
    <property type="entry name" value="Asp_decarbox"/>
    <property type="match status" value="1"/>
</dbReference>
<dbReference type="SUPFAM" id="SSF50692">
    <property type="entry name" value="ADC-like"/>
    <property type="match status" value="1"/>
</dbReference>
<name>PAND_FRATO</name>
<evidence type="ECO:0000255" key="1">
    <source>
        <dbReference type="HAMAP-Rule" id="MF_00446"/>
    </source>
</evidence>
<reference key="1">
    <citation type="journal article" date="2006" name="J. Bacteriol.">
        <title>Chromosome rearrangement and diversification of Francisella tularensis revealed by the type B (OSU18) genome sequence.</title>
        <authorList>
            <person name="Petrosino J.F."/>
            <person name="Xiang Q."/>
            <person name="Karpathy S.E."/>
            <person name="Jiang H."/>
            <person name="Yerrapragada S."/>
            <person name="Liu Y."/>
            <person name="Gioia J."/>
            <person name="Hemphill L."/>
            <person name="Gonzalez A."/>
            <person name="Raghavan T.M."/>
            <person name="Uzman A."/>
            <person name="Fox G.E."/>
            <person name="Highlander S."/>
            <person name="Reichard M."/>
            <person name="Morton R.J."/>
            <person name="Clinkenbeard K.D."/>
            <person name="Weinstock G.M."/>
        </authorList>
    </citation>
    <scope>NUCLEOTIDE SEQUENCE [LARGE SCALE GENOMIC DNA]</scope>
    <source>
        <strain>OSU18</strain>
    </source>
</reference>
<feature type="chain" id="PRO_0000306977" description="Aspartate 1-decarboxylase beta chain" evidence="1">
    <location>
        <begin position="1"/>
        <end position="24"/>
    </location>
</feature>
<feature type="chain" id="PRO_0000306978" description="Aspartate 1-decarboxylase alpha chain" evidence="1">
    <location>
        <begin position="25"/>
        <end position="111"/>
    </location>
</feature>
<feature type="active site" description="Schiff-base intermediate with substrate; via pyruvic acid" evidence="1">
    <location>
        <position position="25"/>
    </location>
</feature>
<feature type="active site" description="Proton donor" evidence="1">
    <location>
        <position position="58"/>
    </location>
</feature>
<feature type="binding site" evidence="1">
    <location>
        <position position="57"/>
    </location>
    <ligand>
        <name>substrate</name>
    </ligand>
</feature>
<feature type="binding site" evidence="1">
    <location>
        <begin position="73"/>
        <end position="75"/>
    </location>
    <ligand>
        <name>substrate</name>
    </ligand>
</feature>
<feature type="modified residue" description="Pyruvic acid (Ser)" evidence="1">
    <location>
        <position position="25"/>
    </location>
</feature>
<proteinExistence type="inferred from homology"/>
<organism>
    <name type="scientific">Francisella tularensis subsp. holarctica (strain OSU18)</name>
    <dbReference type="NCBI Taxonomy" id="393011"/>
    <lineage>
        <taxon>Bacteria</taxon>
        <taxon>Pseudomonadati</taxon>
        <taxon>Pseudomonadota</taxon>
        <taxon>Gammaproteobacteria</taxon>
        <taxon>Thiotrichales</taxon>
        <taxon>Francisellaceae</taxon>
        <taxon>Francisella</taxon>
    </lineage>
</organism>
<comment type="function">
    <text evidence="1">Catalyzes the pyruvoyl-dependent decarboxylation of aspartate to produce beta-alanine.</text>
</comment>
<comment type="catalytic activity">
    <reaction evidence="1">
        <text>L-aspartate + H(+) = beta-alanine + CO2</text>
        <dbReference type="Rhea" id="RHEA:19497"/>
        <dbReference type="ChEBI" id="CHEBI:15378"/>
        <dbReference type="ChEBI" id="CHEBI:16526"/>
        <dbReference type="ChEBI" id="CHEBI:29991"/>
        <dbReference type="ChEBI" id="CHEBI:57966"/>
        <dbReference type="EC" id="4.1.1.11"/>
    </reaction>
</comment>
<comment type="cofactor">
    <cofactor evidence="1">
        <name>pyruvate</name>
        <dbReference type="ChEBI" id="CHEBI:15361"/>
    </cofactor>
    <text evidence="1">Binds 1 pyruvoyl group covalently per subunit.</text>
</comment>
<comment type="pathway">
    <text evidence="1">Cofactor biosynthesis; (R)-pantothenate biosynthesis; beta-alanine from L-aspartate: step 1/1.</text>
</comment>
<comment type="subunit">
    <text evidence="1">Heterooctamer of four alpha and four beta subunits.</text>
</comment>
<comment type="subcellular location">
    <subcellularLocation>
        <location evidence="1">Cytoplasm</location>
    </subcellularLocation>
</comment>
<comment type="PTM">
    <text evidence="1">Is synthesized initially as an inactive proenzyme, which is activated by self-cleavage at a specific serine bond to produce a beta-subunit with a hydroxyl group at its C-terminus and an alpha-subunit with a pyruvoyl group at its N-terminus.</text>
</comment>
<comment type="similarity">
    <text evidence="1">Belongs to the PanD family.</text>
</comment>
<accession>Q0BMQ7</accession>
<keyword id="KW-0068">Autocatalytic cleavage</keyword>
<keyword id="KW-0963">Cytoplasm</keyword>
<keyword id="KW-0210">Decarboxylase</keyword>
<keyword id="KW-0456">Lyase</keyword>
<keyword id="KW-0566">Pantothenate biosynthesis</keyword>
<keyword id="KW-0670">Pyruvate</keyword>
<keyword id="KW-0704">Schiff base</keyword>
<keyword id="KW-0865">Zymogen</keyword>